<organism>
    <name type="scientific">Homo sapiens</name>
    <name type="common">Human</name>
    <dbReference type="NCBI Taxonomy" id="9606"/>
    <lineage>
        <taxon>Eukaryota</taxon>
        <taxon>Metazoa</taxon>
        <taxon>Chordata</taxon>
        <taxon>Craniata</taxon>
        <taxon>Vertebrata</taxon>
        <taxon>Euteleostomi</taxon>
        <taxon>Mammalia</taxon>
        <taxon>Eutheria</taxon>
        <taxon>Euarchontoglires</taxon>
        <taxon>Primates</taxon>
        <taxon>Haplorrhini</taxon>
        <taxon>Catarrhini</taxon>
        <taxon>Hominidae</taxon>
        <taxon>Homo</taxon>
    </lineage>
</organism>
<accession>Q8WTP8</accession>
<accession>C9J571</accession>
<accession>Q9BSA5</accession>
<accession>Q9H9X7</accession>
<protein>
    <recommendedName>
        <fullName>Apoptosis-enhancing nuclease</fullName>
        <ecNumber>3.1.-.-</ecNumber>
    </recommendedName>
    <alternativeName>
        <fullName>Interferon-stimulated 20 kDa exonuclease-like 1</fullName>
    </alternativeName>
</protein>
<reference key="1">
    <citation type="submission" date="2000-12" db="EMBL/GenBank/DDBJ databases">
        <authorList>
            <person name="Zhang W."/>
            <person name="Li N."/>
            <person name="Wan T."/>
            <person name="Chen T."/>
            <person name="Zhang J."/>
            <person name="Cao X."/>
        </authorList>
    </citation>
    <scope>NUCLEOTIDE SEQUENCE [LARGE SCALE MRNA] (ISOFORM 1)</scope>
    <scope>VARIANT ASP-140</scope>
</reference>
<reference key="2">
    <citation type="journal article" date="2006" name="Nature">
        <title>Analysis of the DNA sequence and duplication history of human chromosome 15.</title>
        <authorList>
            <person name="Zody M.C."/>
            <person name="Garber M."/>
            <person name="Sharpe T."/>
            <person name="Young S.K."/>
            <person name="Rowen L."/>
            <person name="O'Neill K."/>
            <person name="Whittaker C.A."/>
            <person name="Kamal M."/>
            <person name="Chang J.L."/>
            <person name="Cuomo C.A."/>
            <person name="Dewar K."/>
            <person name="FitzGerald M.G."/>
            <person name="Kodira C.D."/>
            <person name="Madan A."/>
            <person name="Qin S."/>
            <person name="Yang X."/>
            <person name="Abbasi N."/>
            <person name="Abouelleil A."/>
            <person name="Arachchi H.M."/>
            <person name="Baradarani L."/>
            <person name="Birditt B."/>
            <person name="Bloom S."/>
            <person name="Bloom T."/>
            <person name="Borowsky M.L."/>
            <person name="Burke J."/>
            <person name="Butler J."/>
            <person name="Cook A."/>
            <person name="DeArellano K."/>
            <person name="DeCaprio D."/>
            <person name="Dorris L. III"/>
            <person name="Dors M."/>
            <person name="Eichler E.E."/>
            <person name="Engels R."/>
            <person name="Fahey J."/>
            <person name="Fleetwood P."/>
            <person name="Friedman C."/>
            <person name="Gearin G."/>
            <person name="Hall J.L."/>
            <person name="Hensley G."/>
            <person name="Johnson E."/>
            <person name="Jones C."/>
            <person name="Kamat A."/>
            <person name="Kaur A."/>
            <person name="Locke D.P."/>
            <person name="Madan A."/>
            <person name="Munson G."/>
            <person name="Jaffe D.B."/>
            <person name="Lui A."/>
            <person name="Macdonald P."/>
            <person name="Mauceli E."/>
            <person name="Naylor J.W."/>
            <person name="Nesbitt R."/>
            <person name="Nicol R."/>
            <person name="O'Leary S.B."/>
            <person name="Ratcliffe A."/>
            <person name="Rounsley S."/>
            <person name="She X."/>
            <person name="Sneddon K.M.B."/>
            <person name="Stewart S."/>
            <person name="Sougnez C."/>
            <person name="Stone S.M."/>
            <person name="Topham K."/>
            <person name="Vincent D."/>
            <person name="Wang S."/>
            <person name="Zimmer A.R."/>
            <person name="Birren B.W."/>
            <person name="Hood L."/>
            <person name="Lander E.S."/>
            <person name="Nusbaum C."/>
        </authorList>
    </citation>
    <scope>NUCLEOTIDE SEQUENCE [LARGE SCALE GENOMIC DNA]</scope>
</reference>
<reference key="3">
    <citation type="submission" date="2005-07" db="EMBL/GenBank/DDBJ databases">
        <authorList>
            <person name="Mural R.J."/>
            <person name="Istrail S."/>
            <person name="Sutton G.G."/>
            <person name="Florea L."/>
            <person name="Halpern A.L."/>
            <person name="Mobarry C.M."/>
            <person name="Lippert R."/>
            <person name="Walenz B."/>
            <person name="Shatkay H."/>
            <person name="Dew I."/>
            <person name="Miller J.R."/>
            <person name="Flanigan M.J."/>
            <person name="Edwards N.J."/>
            <person name="Bolanos R."/>
            <person name="Fasulo D."/>
            <person name="Halldorsson B.V."/>
            <person name="Hannenhalli S."/>
            <person name="Turner R."/>
            <person name="Yooseph S."/>
            <person name="Lu F."/>
            <person name="Nusskern D.R."/>
            <person name="Shue B.C."/>
            <person name="Zheng X.H."/>
            <person name="Zhong F."/>
            <person name="Delcher A.L."/>
            <person name="Huson D.H."/>
            <person name="Kravitz S.A."/>
            <person name="Mouchard L."/>
            <person name="Reinert K."/>
            <person name="Remington K.A."/>
            <person name="Clark A.G."/>
            <person name="Waterman M.S."/>
            <person name="Eichler E.E."/>
            <person name="Adams M.D."/>
            <person name="Hunkapiller M.W."/>
            <person name="Myers E.W."/>
            <person name="Venter J.C."/>
        </authorList>
    </citation>
    <scope>NUCLEOTIDE SEQUENCE [LARGE SCALE GENOMIC DNA]</scope>
    <scope>VARIANT ASP-140</scope>
</reference>
<reference key="4">
    <citation type="journal article" date="2004" name="Genome Res.">
        <title>The status, quality, and expansion of the NIH full-length cDNA project: the Mammalian Gene Collection (MGC).</title>
        <authorList>
            <consortium name="The MGC Project Team"/>
        </authorList>
    </citation>
    <scope>NUCLEOTIDE SEQUENCE [LARGE SCALE MRNA] (ISOFORMS 1 AND 2)</scope>
    <scope>VARIANT ASP-140</scope>
    <source>
        <tissue>Colon</tissue>
        <tissue>Muscle</tissue>
    </source>
</reference>
<reference key="5">
    <citation type="journal article" date="2004" name="Nat. Genet.">
        <title>Complete sequencing and characterization of 21,243 full-length human cDNAs.</title>
        <authorList>
            <person name="Ota T."/>
            <person name="Suzuki Y."/>
            <person name="Nishikawa T."/>
            <person name="Otsuki T."/>
            <person name="Sugiyama T."/>
            <person name="Irie R."/>
            <person name="Wakamatsu A."/>
            <person name="Hayashi K."/>
            <person name="Sato H."/>
            <person name="Nagai K."/>
            <person name="Kimura K."/>
            <person name="Makita H."/>
            <person name="Sekine M."/>
            <person name="Obayashi M."/>
            <person name="Nishi T."/>
            <person name="Shibahara T."/>
            <person name="Tanaka T."/>
            <person name="Ishii S."/>
            <person name="Yamamoto J."/>
            <person name="Saito K."/>
            <person name="Kawai Y."/>
            <person name="Isono Y."/>
            <person name="Nakamura Y."/>
            <person name="Nagahari K."/>
            <person name="Murakami K."/>
            <person name="Yasuda T."/>
            <person name="Iwayanagi T."/>
            <person name="Wagatsuma M."/>
            <person name="Shiratori A."/>
            <person name="Sudo H."/>
            <person name="Hosoiri T."/>
            <person name="Kaku Y."/>
            <person name="Kodaira H."/>
            <person name="Kondo H."/>
            <person name="Sugawara M."/>
            <person name="Takahashi M."/>
            <person name="Kanda K."/>
            <person name="Yokoi T."/>
            <person name="Furuya T."/>
            <person name="Kikkawa E."/>
            <person name="Omura Y."/>
            <person name="Abe K."/>
            <person name="Kamihara K."/>
            <person name="Katsuta N."/>
            <person name="Sato K."/>
            <person name="Tanikawa M."/>
            <person name="Yamazaki M."/>
            <person name="Ninomiya K."/>
            <person name="Ishibashi T."/>
            <person name="Yamashita H."/>
            <person name="Murakawa K."/>
            <person name="Fujimori K."/>
            <person name="Tanai H."/>
            <person name="Kimata M."/>
            <person name="Watanabe M."/>
            <person name="Hiraoka S."/>
            <person name="Chiba Y."/>
            <person name="Ishida S."/>
            <person name="Ono Y."/>
            <person name="Takiguchi S."/>
            <person name="Watanabe S."/>
            <person name="Yosida M."/>
            <person name="Hotuta T."/>
            <person name="Kusano J."/>
            <person name="Kanehori K."/>
            <person name="Takahashi-Fujii A."/>
            <person name="Hara H."/>
            <person name="Tanase T.-O."/>
            <person name="Nomura Y."/>
            <person name="Togiya S."/>
            <person name="Komai F."/>
            <person name="Hara R."/>
            <person name="Takeuchi K."/>
            <person name="Arita M."/>
            <person name="Imose N."/>
            <person name="Musashino K."/>
            <person name="Yuuki H."/>
            <person name="Oshima A."/>
            <person name="Sasaki N."/>
            <person name="Aotsuka S."/>
            <person name="Yoshikawa Y."/>
            <person name="Matsunawa H."/>
            <person name="Ichihara T."/>
            <person name="Shiohata N."/>
            <person name="Sano S."/>
            <person name="Moriya S."/>
            <person name="Momiyama H."/>
            <person name="Satoh N."/>
            <person name="Takami S."/>
            <person name="Terashima Y."/>
            <person name="Suzuki O."/>
            <person name="Nakagawa S."/>
            <person name="Senoh A."/>
            <person name="Mizoguchi H."/>
            <person name="Goto Y."/>
            <person name="Shimizu F."/>
            <person name="Wakebe H."/>
            <person name="Hishigaki H."/>
            <person name="Watanabe T."/>
            <person name="Sugiyama A."/>
            <person name="Takemoto M."/>
            <person name="Kawakami B."/>
            <person name="Yamazaki M."/>
            <person name="Watanabe K."/>
            <person name="Kumagai A."/>
            <person name="Itakura S."/>
            <person name="Fukuzumi Y."/>
            <person name="Fujimori Y."/>
            <person name="Komiyama M."/>
            <person name="Tashiro H."/>
            <person name="Tanigami A."/>
            <person name="Fujiwara T."/>
            <person name="Ono T."/>
            <person name="Yamada K."/>
            <person name="Fujii Y."/>
            <person name="Ozaki K."/>
            <person name="Hirao M."/>
            <person name="Ohmori Y."/>
            <person name="Kawabata A."/>
            <person name="Hikiji T."/>
            <person name="Kobatake N."/>
            <person name="Inagaki H."/>
            <person name="Ikema Y."/>
            <person name="Okamoto S."/>
            <person name="Okitani R."/>
            <person name="Kawakami T."/>
            <person name="Noguchi S."/>
            <person name="Itoh T."/>
            <person name="Shigeta K."/>
            <person name="Senba T."/>
            <person name="Matsumura K."/>
            <person name="Nakajima Y."/>
            <person name="Mizuno T."/>
            <person name="Morinaga M."/>
            <person name="Sasaki M."/>
            <person name="Togashi T."/>
            <person name="Oyama M."/>
            <person name="Hata H."/>
            <person name="Watanabe M."/>
            <person name="Komatsu T."/>
            <person name="Mizushima-Sugano J."/>
            <person name="Satoh T."/>
            <person name="Shirai Y."/>
            <person name="Takahashi Y."/>
            <person name="Nakagawa K."/>
            <person name="Okumura K."/>
            <person name="Nagase T."/>
            <person name="Nomura N."/>
            <person name="Kikuchi H."/>
            <person name="Masuho Y."/>
            <person name="Yamashita R."/>
            <person name="Nakai K."/>
            <person name="Yada T."/>
            <person name="Nakamura Y."/>
            <person name="Ohara O."/>
            <person name="Isogai T."/>
            <person name="Sugano S."/>
        </authorList>
    </citation>
    <scope>NUCLEOTIDE SEQUENCE [LARGE SCALE MRNA] OF 106-325 (ISOFORM 1)</scope>
    <scope>VARIANT ASP-140</scope>
</reference>
<reference key="6">
    <citation type="journal article" date="2005" name="Biochem. Biophys. Res. Commun.">
        <title>Identification of a novel ionizing radiation-induced nuclease, AEN, and its functional characterization in apoptosis.</title>
        <authorList>
            <person name="Lee J.-H."/>
            <person name="Koh Y.A."/>
            <person name="Cho C.-K."/>
            <person name="Lee S.J."/>
            <person name="Lee Y.-S."/>
            <person name="Bae S."/>
        </authorList>
    </citation>
    <scope>FUNCTION</scope>
    <scope>INDUCTION</scope>
    <scope>SUBCELLULAR LOCATION</scope>
</reference>
<reference key="7">
    <citation type="journal article" date="2008" name="Oncogene">
        <title>p53 target gene AEN is a nuclear exonuclease required for p53-dependent apoptosis.</title>
        <authorList>
            <person name="Kawase T."/>
            <person name="Ichikawa H."/>
            <person name="Ohta T."/>
            <person name="Nozaki N."/>
            <person name="Tashiro F."/>
            <person name="Ohki R."/>
            <person name="Taya Y."/>
        </authorList>
    </citation>
    <scope>FUNCTION</scope>
    <scope>SUBCELLULAR LOCATION</scope>
    <scope>INDUCTION</scope>
    <scope>NUCLEAR LOCALIZATION SIGNAL</scope>
    <scope>NUCLEOLAR LOCALIZATION SIGNAL</scope>
    <scope>MUTAGENESIS OF ASP-114; GLU-116 AND ASP-258</scope>
</reference>
<evidence type="ECO:0000256" key="1">
    <source>
        <dbReference type="SAM" id="MobiDB-lite"/>
    </source>
</evidence>
<evidence type="ECO:0000269" key="2">
    <source>
    </source>
</evidence>
<evidence type="ECO:0000269" key="3">
    <source>
    </source>
</evidence>
<evidence type="ECO:0000269" key="4">
    <source>
    </source>
</evidence>
<evidence type="ECO:0000269" key="5">
    <source>
    </source>
</evidence>
<evidence type="ECO:0000269" key="6">
    <source ref="1"/>
</evidence>
<evidence type="ECO:0000269" key="7">
    <source ref="3"/>
</evidence>
<evidence type="ECO:0000303" key="8">
    <source>
    </source>
</evidence>
<evidence type="ECO:0000305" key="9"/>
<feature type="chain" id="PRO_0000324088" description="Apoptosis-enhancing nuclease">
    <location>
        <begin position="1"/>
        <end position="325"/>
    </location>
</feature>
<feature type="domain" description="Exonuclease">
    <location>
        <begin position="110"/>
        <end position="266"/>
    </location>
</feature>
<feature type="region of interest" description="Disordered" evidence="1">
    <location>
        <begin position="85"/>
        <end position="105"/>
    </location>
</feature>
<feature type="region of interest" description="Disordered" evidence="1">
    <location>
        <begin position="281"/>
        <end position="325"/>
    </location>
</feature>
<feature type="short sequence motif" description="Nucleolar localization signal">
    <location>
        <begin position="27"/>
        <end position="35"/>
    </location>
</feature>
<feature type="short sequence motif" description="Nuclear localization signal" evidence="5">
    <location>
        <begin position="165"/>
        <end position="188"/>
    </location>
</feature>
<feature type="compositionally biased region" description="Basic and acidic residues" evidence="1">
    <location>
        <begin position="308"/>
        <end position="325"/>
    </location>
</feature>
<feature type="splice variant" id="VSP_032132" description="In isoform 2." evidence="8">
    <original>YWPDDLAHGSRGGAREAQDRRN</original>
    <variation>STQYWALKQKSEKQDSGLNSGAFV</variation>
    <location>
        <begin position="304"/>
        <end position="325"/>
    </location>
</feature>
<feature type="sequence variant" id="VAR_039651" description="In dbSNP:rs3743477.">
    <original>P</original>
    <variation>L</variation>
    <location>
        <position position="15"/>
    </location>
</feature>
<feature type="sequence variant" id="VAR_039652" description="In dbSNP:rs8026929.">
    <original>S</original>
    <variation>C</variation>
    <location>
        <position position="88"/>
    </location>
</feature>
<feature type="sequence variant" id="VAR_039653" description="In dbSNP:rs8027765." evidence="2 3 6 7">
    <original>N</original>
    <variation>D</variation>
    <location>
        <position position="140"/>
    </location>
</feature>
<feature type="mutagenesis site" description="Abolishes exonuclease activity; when associated with A-116 and A-258." evidence="5">
    <original>D</original>
    <variation>A</variation>
    <location>
        <position position="114"/>
    </location>
</feature>
<feature type="mutagenesis site" description="Abolishes exonuclease activity; when associated with A-114 and A-258." evidence="5">
    <original>E</original>
    <variation>A</variation>
    <location>
        <position position="116"/>
    </location>
</feature>
<feature type="mutagenesis site" description="Abolishes exonuclease activity; when associated with A-114 and A-116." evidence="5">
    <original>D</original>
    <variation>A</variation>
    <location>
        <position position="258"/>
    </location>
</feature>
<keyword id="KW-0025">Alternative splicing</keyword>
<keyword id="KW-0053">Apoptosis</keyword>
<keyword id="KW-0227">DNA damage</keyword>
<keyword id="KW-0269">Exonuclease</keyword>
<keyword id="KW-0378">Hydrolase</keyword>
<keyword id="KW-0540">Nuclease</keyword>
<keyword id="KW-0539">Nucleus</keyword>
<keyword id="KW-1267">Proteomics identification</keyword>
<keyword id="KW-1185">Reference proteome</keyword>
<dbReference type="EC" id="3.1.-.-"/>
<dbReference type="EMBL" id="AF327352">
    <property type="protein sequence ID" value="AAL56012.1"/>
    <property type="molecule type" value="mRNA"/>
</dbReference>
<dbReference type="EMBL" id="AC013489">
    <property type="status" value="NOT_ANNOTATED_CDS"/>
    <property type="molecule type" value="Genomic_DNA"/>
</dbReference>
<dbReference type="EMBL" id="CH471101">
    <property type="protein sequence ID" value="EAX02009.1"/>
    <property type="molecule type" value="Genomic_DNA"/>
</dbReference>
<dbReference type="EMBL" id="BC005164">
    <property type="protein sequence ID" value="AAH05164.1"/>
    <property type="molecule type" value="mRNA"/>
</dbReference>
<dbReference type="EMBL" id="BC014407">
    <property type="protein sequence ID" value="AAH14407.1"/>
    <property type="status" value="ALT_INIT"/>
    <property type="molecule type" value="mRNA"/>
</dbReference>
<dbReference type="EMBL" id="BC020988">
    <property type="protein sequence ID" value="AAH20988.1"/>
    <property type="molecule type" value="mRNA"/>
</dbReference>
<dbReference type="EMBL" id="AK022546">
    <property type="protein sequence ID" value="BAB14091.1"/>
    <property type="status" value="ALT_INIT"/>
    <property type="molecule type" value="mRNA"/>
</dbReference>
<dbReference type="CCDS" id="CCDS10344.1">
    <molecule id="Q8WTP8-1"/>
</dbReference>
<dbReference type="RefSeq" id="NP_073604.3">
    <molecule id="Q8WTP8-1"/>
    <property type="nucleotide sequence ID" value="NM_022767.3"/>
</dbReference>
<dbReference type="RefSeq" id="XP_005255023.1">
    <molecule id="Q8WTP8-1"/>
    <property type="nucleotide sequence ID" value="XM_005254966.2"/>
</dbReference>
<dbReference type="RefSeq" id="XP_005255024.1">
    <property type="nucleotide sequence ID" value="XM_005254967.1"/>
</dbReference>
<dbReference type="RefSeq" id="XP_011520207.1">
    <property type="nucleotide sequence ID" value="XM_011521905.2"/>
</dbReference>
<dbReference type="RefSeq" id="XP_016877978.1">
    <molecule id="Q8WTP8-1"/>
    <property type="nucleotide sequence ID" value="XM_017022489.2"/>
</dbReference>
<dbReference type="RefSeq" id="XP_047288902.1">
    <molecule id="Q8WTP8-1"/>
    <property type="nucleotide sequence ID" value="XM_047432946.1"/>
</dbReference>
<dbReference type="RefSeq" id="XP_047288903.1">
    <molecule id="Q8WTP8-1"/>
    <property type="nucleotide sequence ID" value="XM_047432947.1"/>
</dbReference>
<dbReference type="SMR" id="Q8WTP8"/>
<dbReference type="BioGRID" id="122292">
    <property type="interactions" value="48"/>
</dbReference>
<dbReference type="FunCoup" id="Q8WTP8">
    <property type="interactions" value="2435"/>
</dbReference>
<dbReference type="IntAct" id="Q8WTP8">
    <property type="interactions" value="42"/>
</dbReference>
<dbReference type="MINT" id="Q8WTP8"/>
<dbReference type="STRING" id="9606.ENSP00000331944"/>
<dbReference type="iPTMnet" id="Q8WTP8"/>
<dbReference type="PhosphoSitePlus" id="Q8WTP8"/>
<dbReference type="BioMuta" id="AEN"/>
<dbReference type="DMDM" id="296434390"/>
<dbReference type="CPTAC" id="CPTAC-2613"/>
<dbReference type="jPOST" id="Q8WTP8"/>
<dbReference type="MassIVE" id="Q8WTP8"/>
<dbReference type="PaxDb" id="9606-ENSP00000331944"/>
<dbReference type="PeptideAtlas" id="Q8WTP8"/>
<dbReference type="ProteomicsDB" id="74578">
    <molecule id="Q8WTP8-1"/>
</dbReference>
<dbReference type="ProteomicsDB" id="74579">
    <molecule id="Q8WTP8-2"/>
</dbReference>
<dbReference type="Pumba" id="Q8WTP8"/>
<dbReference type="Antibodypedia" id="28501">
    <property type="antibodies" value="79 antibodies from 20 providers"/>
</dbReference>
<dbReference type="DNASU" id="64782"/>
<dbReference type="Ensembl" id="ENST00000332810.4">
    <molecule id="Q8WTP8-1"/>
    <property type="protein sequence ID" value="ENSP00000331944.3"/>
    <property type="gene ID" value="ENSG00000181026.15"/>
</dbReference>
<dbReference type="GeneID" id="64782"/>
<dbReference type="KEGG" id="hsa:64782"/>
<dbReference type="MANE-Select" id="ENST00000332810.4">
    <property type="protein sequence ID" value="ENSP00000331944.3"/>
    <property type="RefSeq nucleotide sequence ID" value="NM_022767.4"/>
    <property type="RefSeq protein sequence ID" value="NP_073604.3"/>
</dbReference>
<dbReference type="UCSC" id="uc002bmt.3">
    <molecule id="Q8WTP8-1"/>
    <property type="organism name" value="human"/>
</dbReference>
<dbReference type="AGR" id="HGNC:25722"/>
<dbReference type="CTD" id="64782"/>
<dbReference type="DisGeNET" id="64782"/>
<dbReference type="GeneCards" id="AEN"/>
<dbReference type="HGNC" id="HGNC:25722">
    <property type="gene designation" value="AEN"/>
</dbReference>
<dbReference type="HPA" id="ENSG00000181026">
    <property type="expression patterns" value="Low tissue specificity"/>
</dbReference>
<dbReference type="MIM" id="610177">
    <property type="type" value="gene"/>
</dbReference>
<dbReference type="neXtProt" id="NX_Q8WTP8"/>
<dbReference type="OpenTargets" id="ENSG00000181026"/>
<dbReference type="PharmGKB" id="PA162375720"/>
<dbReference type="VEuPathDB" id="HostDB:ENSG00000181026"/>
<dbReference type="eggNOG" id="KOG2249">
    <property type="taxonomic scope" value="Eukaryota"/>
</dbReference>
<dbReference type="GeneTree" id="ENSGT00940000161660"/>
<dbReference type="HOGENOM" id="CLU_022453_0_0_1"/>
<dbReference type="InParanoid" id="Q8WTP8"/>
<dbReference type="OMA" id="TDTEQYM"/>
<dbReference type="OrthoDB" id="16516at2759"/>
<dbReference type="PAN-GO" id="Q8WTP8">
    <property type="GO annotations" value="3 GO annotations based on evolutionary models"/>
</dbReference>
<dbReference type="PhylomeDB" id="Q8WTP8"/>
<dbReference type="TreeFam" id="TF354340"/>
<dbReference type="PathwayCommons" id="Q8WTP8"/>
<dbReference type="SignaLink" id="Q8WTP8"/>
<dbReference type="BioGRID-ORCS" id="64782">
    <property type="hits" value="12 hits in 1156 CRISPR screens"/>
</dbReference>
<dbReference type="CD-CODE" id="91857CE7">
    <property type="entry name" value="Nucleolus"/>
</dbReference>
<dbReference type="ChiTaRS" id="AEN">
    <property type="organism name" value="human"/>
</dbReference>
<dbReference type="GenomeRNAi" id="64782"/>
<dbReference type="Pharos" id="Q8WTP8">
    <property type="development level" value="Tbio"/>
</dbReference>
<dbReference type="PRO" id="PR:Q8WTP8"/>
<dbReference type="Proteomes" id="UP000005640">
    <property type="component" value="Chromosome 15"/>
</dbReference>
<dbReference type="RNAct" id="Q8WTP8">
    <property type="molecule type" value="protein"/>
</dbReference>
<dbReference type="Bgee" id="ENSG00000181026">
    <property type="expression patterns" value="Expressed in primordial germ cell in gonad and 139 other cell types or tissues"/>
</dbReference>
<dbReference type="ExpressionAtlas" id="Q8WTP8">
    <property type="expression patterns" value="baseline and differential"/>
</dbReference>
<dbReference type="GO" id="GO:0031965">
    <property type="term" value="C:nuclear membrane"/>
    <property type="evidence" value="ECO:0000314"/>
    <property type="project" value="HPA"/>
</dbReference>
<dbReference type="GO" id="GO:0005730">
    <property type="term" value="C:nucleolus"/>
    <property type="evidence" value="ECO:0000314"/>
    <property type="project" value="HPA"/>
</dbReference>
<dbReference type="GO" id="GO:0005654">
    <property type="term" value="C:nucleoplasm"/>
    <property type="evidence" value="ECO:0000314"/>
    <property type="project" value="HPA"/>
</dbReference>
<dbReference type="GO" id="GO:0005634">
    <property type="term" value="C:nucleus"/>
    <property type="evidence" value="ECO:0000318"/>
    <property type="project" value="GO_Central"/>
</dbReference>
<dbReference type="GO" id="GO:0004529">
    <property type="term" value="F:DNA exonuclease activity"/>
    <property type="evidence" value="ECO:0000314"/>
    <property type="project" value="UniProtKB"/>
</dbReference>
<dbReference type="GO" id="GO:0004527">
    <property type="term" value="F:exonuclease activity"/>
    <property type="evidence" value="ECO:0000314"/>
    <property type="project" value="UniProtKB"/>
</dbReference>
<dbReference type="GO" id="GO:0003676">
    <property type="term" value="F:nucleic acid binding"/>
    <property type="evidence" value="ECO:0007669"/>
    <property type="project" value="InterPro"/>
</dbReference>
<dbReference type="GO" id="GO:0042771">
    <property type="term" value="P:intrinsic apoptotic signaling pathway in response to DNA damage by p53 class mediator"/>
    <property type="evidence" value="ECO:0000314"/>
    <property type="project" value="UniProtKB"/>
</dbReference>
<dbReference type="GO" id="GO:0010212">
    <property type="term" value="P:response to ionizing radiation"/>
    <property type="evidence" value="ECO:0000314"/>
    <property type="project" value="UniProtKB"/>
</dbReference>
<dbReference type="GO" id="GO:0006396">
    <property type="term" value="P:RNA processing"/>
    <property type="evidence" value="ECO:0000318"/>
    <property type="project" value="GO_Central"/>
</dbReference>
<dbReference type="FunFam" id="3.30.420.10:FF:000007">
    <property type="entry name" value="Interferon-stimulated exonuclease gene 20"/>
    <property type="match status" value="1"/>
</dbReference>
<dbReference type="Gene3D" id="3.30.420.10">
    <property type="entry name" value="Ribonuclease H-like superfamily/Ribonuclease H"/>
    <property type="match status" value="1"/>
</dbReference>
<dbReference type="InterPro" id="IPR013520">
    <property type="entry name" value="Exonuclease_RNaseT/DNA_pol3"/>
</dbReference>
<dbReference type="InterPro" id="IPR047021">
    <property type="entry name" value="REXO1/3/4-like"/>
</dbReference>
<dbReference type="InterPro" id="IPR012337">
    <property type="entry name" value="RNaseH-like_sf"/>
</dbReference>
<dbReference type="InterPro" id="IPR036397">
    <property type="entry name" value="RNaseH_sf"/>
</dbReference>
<dbReference type="PANTHER" id="PTHR12801:SF57">
    <property type="entry name" value="APOPTOSIS-ENHANCING NUCLEASE"/>
    <property type="match status" value="1"/>
</dbReference>
<dbReference type="PANTHER" id="PTHR12801">
    <property type="entry name" value="RNA EXONUCLEASE REXO1 / RECO3 FAMILY MEMBER-RELATED"/>
    <property type="match status" value="1"/>
</dbReference>
<dbReference type="Pfam" id="PF00929">
    <property type="entry name" value="RNase_T"/>
    <property type="match status" value="1"/>
</dbReference>
<dbReference type="SMART" id="SM00479">
    <property type="entry name" value="EXOIII"/>
    <property type="match status" value="1"/>
</dbReference>
<dbReference type="SUPFAM" id="SSF53098">
    <property type="entry name" value="Ribonuclease H-like"/>
    <property type="match status" value="1"/>
</dbReference>
<gene>
    <name type="primary">AEN</name>
    <name type="synonym">ISG20L1</name>
    <name type="ORF">SBBI58</name>
</gene>
<name>AEN_HUMAN</name>
<sequence length="325" mass="36350">MVPREAPESAQCLCPSLTIPNAKDVLRKRHKRRSRQHQRFMARKALLQEQGLLSMPPEPGSSPLPTPFGAATATEAASSGKQCLRAGSGSAPCSRRPAPGKASGPLPSKCVAIDCEMVGTGPRGRVSELARCSIVSYHGNVLYDKYIRPEMPIADYRTRWSGITRQHMRKAVPFQVAQKEILKLLKGKVVVGHALHNDFQALKYVHPRSQTRDTTYVPNFLSEPGLHTRARVSLKDLALQLLHKKIQVGQHGHSSVEDATTAMELYRLVEVQWEQQEARSLWTCPEDREPDSSTDMEQYMEDQYWPDDLAHGSRGGAREAQDRRN</sequence>
<comment type="function">
    <text evidence="4 5">Exonuclease with activity against single- and double-stranded DNA and RNA. Mediates p53-induced apoptosis. When induced by p53 following DNA damage, digests double-stranded DNA to form single-stranded DNA and amplifies DNA damage signals, leading to enhancement of apoptosis.</text>
</comment>
<comment type="interaction">
    <interactant intactId="EBI-8637627">
        <id>Q8WTP8</id>
    </interactant>
    <interactant intactId="EBI-10176499">
        <id>C9JG97</id>
        <label>AAMP</label>
    </interactant>
    <organismsDiffer>false</organismsDiffer>
    <experiments>3</experiments>
</comment>
<comment type="interaction">
    <interactant intactId="EBI-8637627">
        <id>Q8WTP8</id>
    </interactant>
    <interactant intactId="EBI-727274">
        <id>Q13685</id>
        <label>AAMP</label>
    </interactant>
    <organismsDiffer>false</organismsDiffer>
    <experiments>2</experiments>
</comment>
<comment type="interaction">
    <interactant intactId="EBI-8637627">
        <id>Q8WTP8</id>
    </interactant>
    <interactant intactId="EBI-489887">
        <id>P50402</id>
        <label>EMD</label>
    </interactant>
    <organismsDiffer>false</organismsDiffer>
    <experiments>3</experiments>
</comment>
<comment type="interaction">
    <interactant intactId="EBI-8637627">
        <id>Q8WTP8</id>
    </interactant>
    <interactant intactId="EBI-371922">
        <id>Q96B26</id>
        <label>EXOSC8</label>
    </interactant>
    <organismsDiffer>false</organismsDiffer>
    <experiments>3</experiments>
</comment>
<comment type="interaction">
    <interactant intactId="EBI-8637627">
        <id>Q8WTP8</id>
    </interactant>
    <interactant intactId="EBI-1104907">
        <id>Q3T906</id>
        <label>GNPTAB</label>
    </interactant>
    <organismsDiffer>false</organismsDiffer>
    <experiments>3</experiments>
</comment>
<comment type="interaction">
    <interactant intactId="EBI-8637627">
        <id>Q8WTP8</id>
    </interactant>
    <interactant intactId="EBI-10172004">
        <id>Q8IX15-3</id>
        <label>HOMEZ</label>
    </interactant>
    <organismsDiffer>false</organismsDiffer>
    <experiments>3</experiments>
</comment>
<comment type="interaction">
    <interactant intactId="EBI-8637627">
        <id>Q8WTP8</id>
    </interactant>
    <interactant intactId="EBI-745305">
        <id>Q13422</id>
        <label>IKZF1</label>
    </interactant>
    <organismsDiffer>false</organismsDiffer>
    <experiments>3</experiments>
</comment>
<comment type="interaction">
    <interactant intactId="EBI-8637627">
        <id>Q8WTP8</id>
    </interactant>
    <interactant intactId="EBI-742808">
        <id>Q5VWX1</id>
        <label>KHDRBS2</label>
    </interactant>
    <organismsDiffer>false</organismsDiffer>
    <experiments>3</experiments>
</comment>
<comment type="interaction">
    <interactant intactId="EBI-8637627">
        <id>Q8WTP8</id>
    </interactant>
    <interactant intactId="EBI-10171697">
        <id>Q6A162</id>
        <label>KRT40</label>
    </interactant>
    <organismsDiffer>false</organismsDiffer>
    <experiments>3</experiments>
</comment>
<comment type="interaction">
    <interactant intactId="EBI-8637627">
        <id>Q8WTP8</id>
    </interactant>
    <interactant intactId="EBI-10172150">
        <id>P60370</id>
        <label>KRTAP10-5</label>
    </interactant>
    <organismsDiffer>false</organismsDiffer>
    <experiments>3</experiments>
</comment>
<comment type="interaction">
    <interactant intactId="EBI-8637627">
        <id>Q8WTP8</id>
    </interactant>
    <interactant intactId="EBI-10172290">
        <id>P60409</id>
        <label>KRTAP10-7</label>
    </interactant>
    <organismsDiffer>false</organismsDiffer>
    <experiments>3</experiments>
</comment>
<comment type="interaction">
    <interactant intactId="EBI-8637627">
        <id>Q8WTP8</id>
    </interactant>
    <interactant intactId="EBI-10171774">
        <id>P60410</id>
        <label>KRTAP10-8</label>
    </interactant>
    <organismsDiffer>false</organismsDiffer>
    <experiments>3</experiments>
</comment>
<comment type="interaction">
    <interactant intactId="EBI-8637627">
        <id>Q8WTP8</id>
    </interactant>
    <interactant intactId="EBI-741037">
        <id>Q9BRK4</id>
        <label>LZTS2</label>
    </interactant>
    <organismsDiffer>false</organismsDiffer>
    <experiments>3</experiments>
</comment>
<comment type="interaction">
    <interactant intactId="EBI-8637627">
        <id>Q8WTP8</id>
    </interactant>
    <interactant intactId="EBI-10225084">
        <id>Q86VM6</id>
        <label>MBNL1</label>
    </interactant>
    <organismsDiffer>false</organismsDiffer>
    <experiments>3</experiments>
</comment>
<comment type="interaction">
    <interactant intactId="EBI-8637627">
        <id>Q8WTP8</id>
    </interactant>
    <interactant intactId="EBI-10172526">
        <id>Q9UJV3-2</id>
        <label>MID2</label>
    </interactant>
    <organismsDiffer>false</organismsDiffer>
    <experiments>3</experiments>
</comment>
<comment type="interaction">
    <interactant intactId="EBI-8637627">
        <id>Q8WTP8</id>
    </interactant>
    <interactant intactId="EBI-742948">
        <id>Q5JR59</id>
        <label>MTUS2</label>
    </interactant>
    <organismsDiffer>false</organismsDiffer>
    <experiments>3</experiments>
</comment>
<comment type="interaction">
    <interactant intactId="EBI-8637627">
        <id>Q8WTP8</id>
    </interactant>
    <interactant intactId="EBI-1105124">
        <id>Q5VU43</id>
        <label>PDE4DIP</label>
    </interactant>
    <organismsDiffer>false</organismsDiffer>
    <experiments>3</experiments>
</comment>
<comment type="interaction">
    <interactant intactId="EBI-8637627">
        <id>Q8WTP8</id>
    </interactant>
    <interactant intactId="EBI-713786">
        <id>Q8IXK0</id>
        <label>PHC2</label>
    </interactant>
    <organismsDiffer>false</organismsDiffer>
    <experiments>3</experiments>
</comment>
<comment type="interaction">
    <interactant intactId="EBI-8637627">
        <id>Q8WTP8</id>
    </interactant>
    <interactant intactId="EBI-741520">
        <id>Q86SE5</id>
        <label>RALYL</label>
    </interactant>
    <organismsDiffer>false</organismsDiffer>
    <experiments>3</experiments>
</comment>
<comment type="interaction">
    <interactant intactId="EBI-8637627">
        <id>Q8WTP8</id>
    </interactant>
    <interactant intactId="EBI-8638511">
        <id>P0DJD3</id>
        <label>RBMY1A1</label>
    </interactant>
    <organismsDiffer>false</organismsDiffer>
    <experiments>3</experiments>
</comment>
<comment type="interaction">
    <interactant intactId="EBI-8637627">
        <id>Q8WTP8</id>
    </interactant>
    <interactant intactId="EBI-8642021">
        <id>Q15415</id>
        <label>RBMY1J</label>
    </interactant>
    <organismsDiffer>false</organismsDiffer>
    <experiments>3</experiments>
</comment>
<comment type="interaction">
    <interactant intactId="EBI-8637627">
        <id>Q8WTP8</id>
    </interactant>
    <interactant intactId="EBI-1050213">
        <id>Q96KN7</id>
        <label>RPGRIP1</label>
    </interactant>
    <organismsDiffer>false</organismsDiffer>
    <experiments>3</experiments>
</comment>
<comment type="interaction">
    <interactant intactId="EBI-8637627">
        <id>Q8WTP8</id>
    </interactant>
    <interactant intactId="EBI-2212028">
        <id>Q9Y2D8</id>
        <label>SSX2IP</label>
    </interactant>
    <organismsDiffer>false</organismsDiffer>
    <experiments>3</experiments>
</comment>
<comment type="interaction">
    <interactant intactId="EBI-8637627">
        <id>Q8WTP8</id>
    </interactant>
    <interactant intactId="EBI-717810">
        <id>Q08117</id>
        <label>TLE5</label>
    </interactant>
    <organismsDiffer>false</organismsDiffer>
    <experiments>3</experiments>
</comment>
<comment type="interaction">
    <interactant intactId="EBI-8637627">
        <id>Q8WTP8</id>
    </interactant>
    <interactant intactId="EBI-719493">
        <id>P14373</id>
        <label>TRIM27</label>
    </interactant>
    <organismsDiffer>false</organismsDiffer>
    <experiments>3</experiments>
</comment>
<comment type="interaction">
    <interactant intactId="EBI-8637627">
        <id>Q8WTP8</id>
    </interactant>
    <interactant intactId="EBI-725997">
        <id>Q8WV44</id>
        <label>TRIM41</label>
    </interactant>
    <organismsDiffer>false</organismsDiffer>
    <experiments>3</experiments>
</comment>
<comment type="interaction">
    <interactant intactId="EBI-8637627">
        <id>Q8WTP8</id>
    </interactant>
    <interactant intactId="EBI-740718">
        <id>O43298</id>
        <label>ZBTB43</label>
    </interactant>
    <organismsDiffer>false</organismsDiffer>
    <experiments>3</experiments>
</comment>
<comment type="interaction">
    <interactant intactId="EBI-8637627">
        <id>Q8WTP8</id>
    </interactant>
    <interactant intactId="EBI-742740">
        <id>Q96BR9</id>
        <label>ZBTB8A</label>
    </interactant>
    <organismsDiffer>false</organismsDiffer>
    <experiments>3</experiments>
</comment>
<comment type="interaction">
    <interactant intactId="EBI-8637627">
        <id>Q8WTP8</id>
    </interactant>
    <interactant intactId="EBI-711679">
        <id>Q9NTW7</id>
        <label>ZFP64</label>
    </interactant>
    <organismsDiffer>false</organismsDiffer>
    <experiments>7</experiments>
</comment>
<comment type="interaction">
    <interactant intactId="EBI-8637627">
        <id>Q8WTP8</id>
    </interactant>
    <interactant intactId="EBI-1210473">
        <id>Q96PQ6</id>
        <label>ZNF317</label>
    </interactant>
    <organismsDiffer>false</organismsDiffer>
    <experiments>4</experiments>
</comment>
<comment type="interaction">
    <interactant intactId="EBI-8637627">
        <id>Q8WTP8</id>
    </interactant>
    <interactant intactId="EBI-751409">
        <id>Q8WTR7</id>
        <label>ZNF473</label>
    </interactant>
    <organismsDiffer>false</organismsDiffer>
    <experiments>5</experiments>
</comment>
<comment type="interaction">
    <interactant intactId="EBI-12119298">
        <id>Q8WTP8-2</id>
    </interactant>
    <interactant intactId="EBI-727274">
        <id>Q13685</id>
        <label>AAMP</label>
    </interactant>
    <organismsDiffer>false</organismsDiffer>
    <experiments>4</experiments>
</comment>
<comment type="interaction">
    <interactant intactId="EBI-12119298">
        <id>Q8WTP8-2</id>
    </interactant>
    <interactant intactId="EBI-712814">
        <id>P54257</id>
        <label>HAP1</label>
    </interactant>
    <organismsDiffer>false</organismsDiffer>
    <experiments>3</experiments>
</comment>
<comment type="interaction">
    <interactant intactId="EBI-12119298">
        <id>Q8WTP8-2</id>
    </interactant>
    <interactant intactId="EBI-2556193">
        <id>Q63ZY3</id>
        <label>KANK2</label>
    </interactant>
    <organismsDiffer>false</organismsDiffer>
    <experiments>3</experiments>
</comment>
<comment type="interaction">
    <interactant intactId="EBI-12119298">
        <id>Q8WTP8-2</id>
    </interactant>
    <interactant intactId="EBI-741037">
        <id>Q9BRK4</id>
        <label>LZTS2</label>
    </interactant>
    <organismsDiffer>false</organismsDiffer>
    <experiments>3</experiments>
</comment>
<comment type="interaction">
    <interactant intactId="EBI-12119298">
        <id>Q8WTP8-2</id>
    </interactant>
    <interactant intactId="EBI-10246152">
        <id>Q5T7P8-2</id>
        <label>SYT6</label>
    </interactant>
    <organismsDiffer>false</organismsDiffer>
    <experiments>3</experiments>
</comment>
<comment type="interaction">
    <interactant intactId="EBI-12119298">
        <id>Q8WTP8-2</id>
    </interactant>
    <interactant intactId="EBI-347633">
        <id>Q9H9D4</id>
        <label>ZNF408</label>
    </interactant>
    <organismsDiffer>false</organismsDiffer>
    <experiments>3</experiments>
</comment>
<comment type="subcellular location">
    <subcellularLocation>
        <location>Nucleus</location>
    </subcellularLocation>
    <subcellularLocation>
        <location>Nucleus</location>
        <location>Nucleolus</location>
    </subcellularLocation>
    <text>Localized predomintly in the nucleolus. Translocates from the nucleolus to the nucleoplasm upon apoptosis induction.</text>
</comment>
<comment type="alternative products">
    <event type="alternative splicing"/>
    <isoform>
        <id>Q8WTP8-1</id>
        <name>1</name>
        <sequence type="displayed"/>
    </isoform>
    <isoform>
        <id>Q8WTP8-2</id>
        <name>2</name>
        <sequence type="described" ref="VSP_032132"/>
    </isoform>
</comment>
<comment type="induction">
    <text evidence="4 5">Up-regulated by p53/TP53 in response to ionizing radiation and DNA-damaging agents such as adriamycin. Phosphorylation of p53/TP53 at 'Ser-15' is required for effective induction.</text>
</comment>
<comment type="sequence caution" evidence="9">
    <conflict type="erroneous initiation">
        <sequence resource="EMBL-CDS" id="AAH14407"/>
    </conflict>
    <text>Truncated N-terminus.</text>
</comment>
<comment type="sequence caution" evidence="9">
    <conflict type="erroneous initiation">
        <sequence resource="EMBL-CDS" id="BAB14091"/>
    </conflict>
    <text>Truncated N-terminus.</text>
</comment>
<proteinExistence type="evidence at protein level"/>